<sequence>MPPQLHNGLDFSAKVIQGSLDSLPQEVRKFVEGNAQLCQPEYIHICDGSEEEYGRLLAHMQEEGVIRKLKKYDNCWLALTDPRDVARIESKTVIITQEQRDTVPIPKSGQSQLGRWMSEEDFEKAFNARFPGCMKGRTMYVIPFSMGPLGSPLAKIGIELTDSPYVVASMRIMTRMGTSVLEALGDGEFIKCLHSVGCPLPLKKPLVNNWACNPELTLIAHLPDRREIISFGSGYGGNSLLGKKCFALRIASRLAKEEGWLAEHMLILGITNPEGKKKYLAAAFPSACGKTNLAMMNPTLPGWKVECVGDDIAWMKFDAQGNLRAINPENGFFGVAPGTSVKTNPNAIKTIQKNTIFTNVAETSDGGVYWEGIDEPLAPGVTITSWKNKEWRPQDEEPCAHPNSRFCTPASQCPIIDPAWESPEGVPIEGIIFGGRRPAGVPLVYEALSWQHGVFVGAAMRSEATAAAEHKGKVIMHDPFAMRPFFGYNFGKYLAHWLSMAHRPAAKLPKIFHVNWFRKDKNGKFLWPGFGENSRVLEWMFGRIEGEDSAKLTPIGYVPKEDALNLKGLGDVNVEELFGISKEFWEKEVEEIDKYLEDQVNADLPYEIERELRALKQRISQM</sequence>
<name>PCKGC_RAT</name>
<dbReference type="EC" id="4.1.1.32" evidence="11 12 13 15 16"/>
<dbReference type="EC" id="2.7.11.-" evidence="1"/>
<dbReference type="EMBL" id="K03248">
    <property type="protein sequence ID" value="AAC98698.1"/>
    <property type="molecule type" value="Genomic_DNA"/>
</dbReference>
<dbReference type="EMBL" id="K03243">
    <property type="protein sequence ID" value="AAC98698.1"/>
    <property type="status" value="JOINED"/>
    <property type="molecule type" value="Genomic_DNA"/>
</dbReference>
<dbReference type="EMBL" id="K03244">
    <property type="protein sequence ID" value="AAC98698.1"/>
    <property type="status" value="JOINED"/>
    <property type="molecule type" value="Genomic_DNA"/>
</dbReference>
<dbReference type="EMBL" id="K03245">
    <property type="protein sequence ID" value="AAC98698.1"/>
    <property type="status" value="JOINED"/>
    <property type="molecule type" value="Genomic_DNA"/>
</dbReference>
<dbReference type="EMBL" id="K03246">
    <property type="protein sequence ID" value="AAC98698.1"/>
    <property type="status" value="JOINED"/>
    <property type="molecule type" value="Genomic_DNA"/>
</dbReference>
<dbReference type="EMBL" id="K03247">
    <property type="protein sequence ID" value="AAC98698.1"/>
    <property type="status" value="JOINED"/>
    <property type="molecule type" value="Genomic_DNA"/>
</dbReference>
<dbReference type="EMBL" id="BC081900">
    <property type="protein sequence ID" value="AAH81900.1"/>
    <property type="molecule type" value="mRNA"/>
</dbReference>
<dbReference type="PIR" id="A23927">
    <property type="entry name" value="QYRTGP"/>
</dbReference>
<dbReference type="RefSeq" id="NP_942075.1">
    <property type="nucleotide sequence ID" value="NM_198780.3"/>
</dbReference>
<dbReference type="PDB" id="2QEW">
    <property type="method" value="X-ray"/>
    <property type="resolution" value="1.80 A"/>
    <property type="chains" value="A=1-622"/>
</dbReference>
<dbReference type="PDB" id="2QEY">
    <property type="method" value="X-ray"/>
    <property type="resolution" value="1.90 A"/>
    <property type="chains" value="A=1-622"/>
</dbReference>
<dbReference type="PDB" id="2QF1">
    <property type="method" value="X-ray"/>
    <property type="resolution" value="1.80 A"/>
    <property type="chains" value="A=1-622"/>
</dbReference>
<dbReference type="PDB" id="2QF2">
    <property type="method" value="X-ray"/>
    <property type="resolution" value="1.65 A"/>
    <property type="chains" value="A/B=1-622"/>
</dbReference>
<dbReference type="PDB" id="2RK7">
    <property type="method" value="X-ray"/>
    <property type="resolution" value="1.90 A"/>
    <property type="chains" value="A/B=1-622"/>
</dbReference>
<dbReference type="PDB" id="2RK8">
    <property type="method" value="X-ray"/>
    <property type="resolution" value="2.00 A"/>
    <property type="chains" value="A/B=1-622"/>
</dbReference>
<dbReference type="PDB" id="2RKA">
    <property type="method" value="X-ray"/>
    <property type="resolution" value="1.95 A"/>
    <property type="chains" value="A/C=1-622"/>
</dbReference>
<dbReference type="PDB" id="2RKD">
    <property type="method" value="X-ray"/>
    <property type="resolution" value="1.90 A"/>
    <property type="chains" value="A=1-622"/>
</dbReference>
<dbReference type="PDB" id="2RKE">
    <property type="method" value="X-ray"/>
    <property type="resolution" value="1.80 A"/>
    <property type="chains" value="A=1-622"/>
</dbReference>
<dbReference type="PDB" id="3DT2">
    <property type="method" value="X-ray"/>
    <property type="resolution" value="1.50 A"/>
    <property type="chains" value="A=1-622"/>
</dbReference>
<dbReference type="PDB" id="3DT4">
    <property type="method" value="X-ray"/>
    <property type="resolution" value="1.45 A"/>
    <property type="chains" value="A/C=1-622"/>
</dbReference>
<dbReference type="PDB" id="3DT7">
    <property type="method" value="X-ray"/>
    <property type="resolution" value="1.50 A"/>
    <property type="chains" value="A/B=1-622"/>
</dbReference>
<dbReference type="PDB" id="3DTB">
    <property type="method" value="X-ray"/>
    <property type="resolution" value="1.30 A"/>
    <property type="chains" value="A/B=1-622"/>
</dbReference>
<dbReference type="PDB" id="3MOE">
    <property type="method" value="X-ray"/>
    <property type="resolution" value="1.25 A"/>
    <property type="chains" value="A=1-622"/>
</dbReference>
<dbReference type="PDB" id="3MOF">
    <property type="method" value="X-ray"/>
    <property type="resolution" value="1.75 A"/>
    <property type="chains" value="A/B=1-622"/>
</dbReference>
<dbReference type="PDB" id="3MOH">
    <property type="method" value="X-ray"/>
    <property type="resolution" value="2.10 A"/>
    <property type="chains" value="A/B=1-622"/>
</dbReference>
<dbReference type="PDB" id="4GMM">
    <property type="method" value="X-ray"/>
    <property type="resolution" value="1.74 A"/>
    <property type="chains" value="A=1-463, A=475-622"/>
</dbReference>
<dbReference type="PDB" id="4GMU">
    <property type="method" value="X-ray"/>
    <property type="resolution" value="1.20 A"/>
    <property type="chains" value="A=1-463, A=475-622"/>
</dbReference>
<dbReference type="PDB" id="4GMW">
    <property type="method" value="X-ray"/>
    <property type="resolution" value="1.75 A"/>
    <property type="chains" value="A=1-463, A=475-622"/>
</dbReference>
<dbReference type="PDB" id="4GMZ">
    <property type="method" value="X-ray"/>
    <property type="resolution" value="2.05 A"/>
    <property type="chains" value="A=1-463, A=475-622"/>
</dbReference>
<dbReference type="PDB" id="4GNL">
    <property type="method" value="X-ray"/>
    <property type="resolution" value="1.70 A"/>
    <property type="chains" value="A=1-463, A=475-622"/>
</dbReference>
<dbReference type="PDB" id="4GNM">
    <property type="method" value="X-ray"/>
    <property type="resolution" value="1.50 A"/>
    <property type="chains" value="A=1-463, A=475-622"/>
</dbReference>
<dbReference type="PDB" id="4GNO">
    <property type="method" value="X-ray"/>
    <property type="resolution" value="1.50 A"/>
    <property type="chains" value="A=1-463, A=475-622"/>
</dbReference>
<dbReference type="PDB" id="4GNP">
    <property type="method" value="X-ray"/>
    <property type="resolution" value="1.74 A"/>
    <property type="chains" value="A=1-463, A=475-622"/>
</dbReference>
<dbReference type="PDB" id="4GNQ">
    <property type="method" value="X-ray"/>
    <property type="resolution" value="1.40 A"/>
    <property type="chains" value="A=1-463, A=475-622"/>
</dbReference>
<dbReference type="PDB" id="4OX2">
    <property type="method" value="X-ray"/>
    <property type="resolution" value="2.00 A"/>
    <property type="chains" value="A/B=1-622"/>
</dbReference>
<dbReference type="PDB" id="4YW8">
    <property type="method" value="X-ray"/>
    <property type="resolution" value="1.55 A"/>
    <property type="chains" value="A=1-622"/>
</dbReference>
<dbReference type="PDB" id="4YW9">
    <property type="method" value="X-ray"/>
    <property type="resolution" value="1.40 A"/>
    <property type="chains" value="A=1-622"/>
</dbReference>
<dbReference type="PDB" id="4YWB">
    <property type="method" value="X-ray"/>
    <property type="resolution" value="1.50 A"/>
    <property type="chains" value="A/C=1-622"/>
</dbReference>
<dbReference type="PDB" id="4YWD">
    <property type="method" value="X-ray"/>
    <property type="resolution" value="2.10 A"/>
    <property type="chains" value="A=1-622"/>
</dbReference>
<dbReference type="PDB" id="5FH0">
    <property type="method" value="X-ray"/>
    <property type="resolution" value="1.60 A"/>
    <property type="chains" value="A=1-622"/>
</dbReference>
<dbReference type="PDB" id="5FH1">
    <property type="method" value="X-ray"/>
    <property type="resolution" value="1.55 A"/>
    <property type="chains" value="A=1-622"/>
</dbReference>
<dbReference type="PDB" id="5FH2">
    <property type="method" value="X-ray"/>
    <property type="resolution" value="1.49 A"/>
    <property type="chains" value="A=1-622"/>
</dbReference>
<dbReference type="PDB" id="5FH3">
    <property type="method" value="X-ray"/>
    <property type="resolution" value="1.60 A"/>
    <property type="chains" value="A=1-622"/>
</dbReference>
<dbReference type="PDB" id="5FH4">
    <property type="method" value="X-ray"/>
    <property type="resolution" value="1.49 A"/>
    <property type="chains" value="A=1-622"/>
</dbReference>
<dbReference type="PDB" id="5FH5">
    <property type="method" value="X-ray"/>
    <property type="resolution" value="1.55 A"/>
    <property type="chains" value="A=1-622"/>
</dbReference>
<dbReference type="PDB" id="5V95">
    <property type="method" value="X-ray"/>
    <property type="resolution" value="2.30 A"/>
    <property type="chains" value="A=1-622"/>
</dbReference>
<dbReference type="PDB" id="5V97">
    <property type="method" value="X-ray"/>
    <property type="resolution" value="1.80 A"/>
    <property type="chains" value="A=1-622"/>
</dbReference>
<dbReference type="PDB" id="5V9F">
    <property type="method" value="X-ray"/>
    <property type="resolution" value="2.05 A"/>
    <property type="chains" value="A=1-622"/>
</dbReference>
<dbReference type="PDB" id="5V9G">
    <property type="method" value="X-ray"/>
    <property type="resolution" value="1.95 A"/>
    <property type="chains" value="A=1-622"/>
</dbReference>
<dbReference type="PDB" id="5V9H">
    <property type="method" value="X-ray"/>
    <property type="resolution" value="2.15 A"/>
    <property type="chains" value="A/B=1-622"/>
</dbReference>
<dbReference type="PDB" id="6P5O">
    <property type="method" value="X-ray"/>
    <property type="resolution" value="1.49 A"/>
    <property type="chains" value="A=1-622"/>
</dbReference>
<dbReference type="PDB" id="6YI9">
    <property type="method" value="X-ray"/>
    <property type="resolution" value="1.75 A"/>
    <property type="chains" value="A=1-622"/>
</dbReference>
<dbReference type="PDB" id="7L36">
    <property type="method" value="X-ray"/>
    <property type="resolution" value="1.84 A"/>
    <property type="chains" value="A=1-622"/>
</dbReference>
<dbReference type="PDB" id="7L3M">
    <property type="method" value="X-ray"/>
    <property type="resolution" value="2.07 A"/>
    <property type="chains" value="A=1-622"/>
</dbReference>
<dbReference type="PDB" id="7L3V">
    <property type="method" value="X-ray"/>
    <property type="resolution" value="1.98 A"/>
    <property type="chains" value="A=1-622"/>
</dbReference>
<dbReference type="PDBsum" id="2QEW"/>
<dbReference type="PDBsum" id="2QEY"/>
<dbReference type="PDBsum" id="2QF1"/>
<dbReference type="PDBsum" id="2QF2"/>
<dbReference type="PDBsum" id="2RK7"/>
<dbReference type="PDBsum" id="2RK8"/>
<dbReference type="PDBsum" id="2RKA"/>
<dbReference type="PDBsum" id="2RKD"/>
<dbReference type="PDBsum" id="2RKE"/>
<dbReference type="PDBsum" id="3DT2"/>
<dbReference type="PDBsum" id="3DT4"/>
<dbReference type="PDBsum" id="3DT7"/>
<dbReference type="PDBsum" id="3DTB"/>
<dbReference type="PDBsum" id="3MOE"/>
<dbReference type="PDBsum" id="3MOF"/>
<dbReference type="PDBsum" id="3MOH"/>
<dbReference type="PDBsum" id="4GMM"/>
<dbReference type="PDBsum" id="4GMU"/>
<dbReference type="PDBsum" id="4GMW"/>
<dbReference type="PDBsum" id="4GMZ"/>
<dbReference type="PDBsum" id="4GNL"/>
<dbReference type="PDBsum" id="4GNM"/>
<dbReference type="PDBsum" id="4GNO"/>
<dbReference type="PDBsum" id="4GNP"/>
<dbReference type="PDBsum" id="4GNQ"/>
<dbReference type="PDBsum" id="4OX2"/>
<dbReference type="PDBsum" id="4YW8"/>
<dbReference type="PDBsum" id="4YW9"/>
<dbReference type="PDBsum" id="4YWB"/>
<dbReference type="PDBsum" id="4YWD"/>
<dbReference type="PDBsum" id="5FH0"/>
<dbReference type="PDBsum" id="5FH1"/>
<dbReference type="PDBsum" id="5FH2"/>
<dbReference type="PDBsum" id="5FH3"/>
<dbReference type="PDBsum" id="5FH4"/>
<dbReference type="PDBsum" id="5FH5"/>
<dbReference type="PDBsum" id="5V95"/>
<dbReference type="PDBsum" id="5V97"/>
<dbReference type="PDBsum" id="5V9F"/>
<dbReference type="PDBsum" id="5V9G"/>
<dbReference type="PDBsum" id="5V9H"/>
<dbReference type="PDBsum" id="6P5O"/>
<dbReference type="PDBsum" id="6YI9"/>
<dbReference type="PDBsum" id="7L36"/>
<dbReference type="PDBsum" id="7L3M"/>
<dbReference type="PDBsum" id="7L3V"/>
<dbReference type="SMR" id="P07379"/>
<dbReference type="BioGRID" id="263330">
    <property type="interactions" value="1"/>
</dbReference>
<dbReference type="FunCoup" id="P07379">
    <property type="interactions" value="204"/>
</dbReference>
<dbReference type="STRING" id="10116.ENSRNOP00000030913"/>
<dbReference type="BindingDB" id="P07379"/>
<dbReference type="ChEMBL" id="CHEMBL1075234"/>
<dbReference type="iPTMnet" id="P07379"/>
<dbReference type="PhosphoSitePlus" id="P07379"/>
<dbReference type="jPOST" id="P07379"/>
<dbReference type="PaxDb" id="10116-ENSRNOP00000030913"/>
<dbReference type="Ensembl" id="ENSRNOT00000031586.7">
    <property type="protein sequence ID" value="ENSRNOP00000030913.4"/>
    <property type="gene ID" value="ENSRNOG00000028616.7"/>
</dbReference>
<dbReference type="GeneID" id="362282"/>
<dbReference type="KEGG" id="rno:362282"/>
<dbReference type="AGR" id="RGD:3267"/>
<dbReference type="CTD" id="5105"/>
<dbReference type="RGD" id="3267">
    <property type="gene designation" value="Pck1"/>
</dbReference>
<dbReference type="eggNOG" id="KOG3749">
    <property type="taxonomic scope" value="Eukaryota"/>
</dbReference>
<dbReference type="GeneTree" id="ENSGT00390000001912"/>
<dbReference type="HOGENOM" id="CLU_028872_1_0_1"/>
<dbReference type="InParanoid" id="P07379"/>
<dbReference type="OMA" id="GPTNNWV"/>
<dbReference type="OrthoDB" id="11190at9989"/>
<dbReference type="PhylomeDB" id="P07379"/>
<dbReference type="TreeFam" id="TF314402"/>
<dbReference type="BRENDA" id="4.1.1.32">
    <property type="organism ID" value="5301"/>
</dbReference>
<dbReference type="Reactome" id="R-RNO-70263">
    <property type="pathway name" value="Gluconeogenesis"/>
</dbReference>
<dbReference type="SABIO-RK" id="P07379"/>
<dbReference type="UniPathway" id="UPA00138"/>
<dbReference type="EvolutionaryTrace" id="P07379"/>
<dbReference type="PRO" id="PR:P07379"/>
<dbReference type="Proteomes" id="UP000002494">
    <property type="component" value="Chromosome 3"/>
</dbReference>
<dbReference type="Bgee" id="ENSRNOG00000028616">
    <property type="expression patterns" value="Expressed in kidney and 17 other cell types or tissues"/>
</dbReference>
<dbReference type="GO" id="GO:0005737">
    <property type="term" value="C:cytoplasm"/>
    <property type="evidence" value="ECO:0000314"/>
    <property type="project" value="BHF-UCL"/>
</dbReference>
<dbReference type="GO" id="GO:0005829">
    <property type="term" value="C:cytosol"/>
    <property type="evidence" value="ECO:0000250"/>
    <property type="project" value="UniProtKB"/>
</dbReference>
<dbReference type="GO" id="GO:0005783">
    <property type="term" value="C:endoplasmic reticulum"/>
    <property type="evidence" value="ECO:0000250"/>
    <property type="project" value="UniProtKB"/>
</dbReference>
<dbReference type="GO" id="GO:0005739">
    <property type="term" value="C:mitochondrion"/>
    <property type="evidence" value="ECO:0000318"/>
    <property type="project" value="GO_Central"/>
</dbReference>
<dbReference type="GO" id="GO:0031406">
    <property type="term" value="F:carboxylic acid binding"/>
    <property type="evidence" value="ECO:0000314"/>
    <property type="project" value="BHF-UCL"/>
</dbReference>
<dbReference type="GO" id="GO:0019003">
    <property type="term" value="F:GDP binding"/>
    <property type="evidence" value="ECO:0000314"/>
    <property type="project" value="RGD"/>
</dbReference>
<dbReference type="GO" id="GO:0005525">
    <property type="term" value="F:GTP binding"/>
    <property type="evidence" value="ECO:0000314"/>
    <property type="project" value="BHF-UCL"/>
</dbReference>
<dbReference type="GO" id="GO:0000287">
    <property type="term" value="F:magnesium ion binding"/>
    <property type="evidence" value="ECO:0000250"/>
    <property type="project" value="BHF-UCL"/>
</dbReference>
<dbReference type="GO" id="GO:0030145">
    <property type="term" value="F:manganese ion binding"/>
    <property type="evidence" value="ECO:0000314"/>
    <property type="project" value="BHF-UCL"/>
</dbReference>
<dbReference type="GO" id="GO:0004550">
    <property type="term" value="F:nucleoside diphosphate kinase activity"/>
    <property type="evidence" value="ECO:0000269"/>
    <property type="project" value="Reactome"/>
</dbReference>
<dbReference type="GO" id="GO:0004613">
    <property type="term" value="F:phosphoenolpyruvate carboxykinase (GTP) activity"/>
    <property type="evidence" value="ECO:0000314"/>
    <property type="project" value="UniProtKB"/>
</dbReference>
<dbReference type="GO" id="GO:0004611">
    <property type="term" value="F:phosphoenolpyruvate carboxykinase activity"/>
    <property type="evidence" value="ECO:0000314"/>
    <property type="project" value="RGD"/>
</dbReference>
<dbReference type="GO" id="GO:0106264">
    <property type="term" value="F:protein serine kinase activity (using GTP as donor)"/>
    <property type="evidence" value="ECO:0000250"/>
    <property type="project" value="UniProtKB"/>
</dbReference>
<dbReference type="GO" id="GO:0071474">
    <property type="term" value="P:cellular hyperosmotic response"/>
    <property type="evidence" value="ECO:0000270"/>
    <property type="project" value="RGD"/>
</dbReference>
<dbReference type="GO" id="GO:0071475">
    <property type="term" value="P:cellular hyperosmotic salinity response"/>
    <property type="evidence" value="ECO:0000270"/>
    <property type="project" value="RGD"/>
</dbReference>
<dbReference type="GO" id="GO:0071476">
    <property type="term" value="P:cellular hypotonic response"/>
    <property type="evidence" value="ECO:0000270"/>
    <property type="project" value="RGD"/>
</dbReference>
<dbReference type="GO" id="GO:0071477">
    <property type="term" value="P:cellular hypotonic salinity response"/>
    <property type="evidence" value="ECO:0000270"/>
    <property type="project" value="RGD"/>
</dbReference>
<dbReference type="GO" id="GO:0071320">
    <property type="term" value="P:cellular response to cAMP"/>
    <property type="evidence" value="ECO:0000270"/>
    <property type="project" value="RGD"/>
</dbReference>
<dbReference type="GO" id="GO:0071549">
    <property type="term" value="P:cellular response to dexamethasone stimulus"/>
    <property type="evidence" value="ECO:0000318"/>
    <property type="project" value="GO_Central"/>
</dbReference>
<dbReference type="GO" id="GO:0071332">
    <property type="term" value="P:cellular response to fructose stimulus"/>
    <property type="evidence" value="ECO:0000270"/>
    <property type="project" value="RGD"/>
</dbReference>
<dbReference type="GO" id="GO:0071377">
    <property type="term" value="P:cellular response to glucagon stimulus"/>
    <property type="evidence" value="ECO:0000270"/>
    <property type="project" value="RGD"/>
</dbReference>
<dbReference type="GO" id="GO:0071333">
    <property type="term" value="P:cellular response to glucose stimulus"/>
    <property type="evidence" value="ECO:0000314"/>
    <property type="project" value="UniProtKB"/>
</dbReference>
<dbReference type="GO" id="GO:0071456">
    <property type="term" value="P:cellular response to hypoxia"/>
    <property type="evidence" value="ECO:0000270"/>
    <property type="project" value="RGD"/>
</dbReference>
<dbReference type="GO" id="GO:0032869">
    <property type="term" value="P:cellular response to insulin stimulus"/>
    <property type="evidence" value="ECO:0000270"/>
    <property type="project" value="RGD"/>
</dbReference>
<dbReference type="GO" id="GO:0071347">
    <property type="term" value="P:cellular response to interleukin-1"/>
    <property type="evidence" value="ECO:0000270"/>
    <property type="project" value="RGD"/>
</dbReference>
<dbReference type="GO" id="GO:1904628">
    <property type="term" value="P:cellular response to phorbol 13-acetate 12-myristate"/>
    <property type="evidence" value="ECO:0000270"/>
    <property type="project" value="RGD"/>
</dbReference>
<dbReference type="GO" id="GO:0051365">
    <property type="term" value="P:cellular response to potassium ion starvation"/>
    <property type="evidence" value="ECO:0000266"/>
    <property type="project" value="RGD"/>
</dbReference>
<dbReference type="GO" id="GO:0097403">
    <property type="term" value="P:cellular response to raffinose"/>
    <property type="evidence" value="ECO:0000270"/>
    <property type="project" value="RGD"/>
</dbReference>
<dbReference type="GO" id="GO:0071300">
    <property type="term" value="P:cellular response to retinoic acid"/>
    <property type="evidence" value="ECO:0000270"/>
    <property type="project" value="RGD"/>
</dbReference>
<dbReference type="GO" id="GO:0071356">
    <property type="term" value="P:cellular response to tumor necrosis factor"/>
    <property type="evidence" value="ECO:0000270"/>
    <property type="project" value="RGD"/>
</dbReference>
<dbReference type="GO" id="GO:0006094">
    <property type="term" value="P:gluconeogenesis"/>
    <property type="evidence" value="ECO:0000314"/>
    <property type="project" value="BHF-UCL"/>
</dbReference>
<dbReference type="GO" id="GO:0042593">
    <property type="term" value="P:glucose homeostasis"/>
    <property type="evidence" value="ECO:0000314"/>
    <property type="project" value="BHF-UCL"/>
</dbReference>
<dbReference type="GO" id="GO:0006006">
    <property type="term" value="P:glucose metabolic process"/>
    <property type="evidence" value="ECO:0000315"/>
    <property type="project" value="BHF-UCL"/>
</dbReference>
<dbReference type="GO" id="GO:0046166">
    <property type="term" value="P:glyceraldehyde-3-phosphate biosynthetic process"/>
    <property type="evidence" value="ECO:0000266"/>
    <property type="project" value="RGD"/>
</dbReference>
<dbReference type="GO" id="GO:0046327">
    <property type="term" value="P:glycerol biosynthetic process from pyruvate"/>
    <property type="evidence" value="ECO:0000314"/>
    <property type="project" value="BHF-UCL"/>
</dbReference>
<dbReference type="GO" id="GO:0070365">
    <property type="term" value="P:hepatocyte differentiation"/>
    <property type="evidence" value="ECO:0000318"/>
    <property type="project" value="GO_Central"/>
</dbReference>
<dbReference type="GO" id="GO:0006629">
    <property type="term" value="P:lipid metabolic process"/>
    <property type="evidence" value="ECO:0000266"/>
    <property type="project" value="RGD"/>
</dbReference>
<dbReference type="GO" id="GO:0006107">
    <property type="term" value="P:oxaloacetate metabolic process"/>
    <property type="evidence" value="ECO:0000314"/>
    <property type="project" value="UniProtKB"/>
</dbReference>
<dbReference type="GO" id="GO:0018105">
    <property type="term" value="P:peptidyl-serine phosphorylation"/>
    <property type="evidence" value="ECO:0000250"/>
    <property type="project" value="UniProtKB"/>
</dbReference>
<dbReference type="GO" id="GO:0046889">
    <property type="term" value="P:positive regulation of lipid biosynthetic process"/>
    <property type="evidence" value="ECO:0000266"/>
    <property type="project" value="RGD"/>
</dbReference>
<dbReference type="GO" id="GO:0043382">
    <property type="term" value="P:positive regulation of memory T cell differentiation"/>
    <property type="evidence" value="ECO:0000250"/>
    <property type="project" value="UniProtKB"/>
</dbReference>
<dbReference type="GO" id="GO:0045944">
    <property type="term" value="P:positive regulation of transcription by RNA polymerase II"/>
    <property type="evidence" value="ECO:0000266"/>
    <property type="project" value="RGD"/>
</dbReference>
<dbReference type="GO" id="GO:0019543">
    <property type="term" value="P:propionate catabolic process"/>
    <property type="evidence" value="ECO:0000318"/>
    <property type="project" value="GO_Central"/>
</dbReference>
<dbReference type="GO" id="GO:0046890">
    <property type="term" value="P:regulation of lipid biosynthetic process"/>
    <property type="evidence" value="ECO:0000250"/>
    <property type="project" value="UniProtKB"/>
</dbReference>
<dbReference type="GO" id="GO:0014823">
    <property type="term" value="P:response to activity"/>
    <property type="evidence" value="ECO:0000270"/>
    <property type="project" value="RGD"/>
</dbReference>
<dbReference type="GO" id="GO:0009617">
    <property type="term" value="P:response to bacterium"/>
    <property type="evidence" value="ECO:0000266"/>
    <property type="project" value="RGD"/>
</dbReference>
<dbReference type="GO" id="GO:0032868">
    <property type="term" value="P:response to insulin"/>
    <property type="evidence" value="ECO:0000250"/>
    <property type="project" value="BHF-UCL"/>
</dbReference>
<dbReference type="GO" id="GO:0070741">
    <property type="term" value="P:response to interleukin-6"/>
    <property type="evidence" value="ECO:0000270"/>
    <property type="project" value="RGD"/>
</dbReference>
<dbReference type="GO" id="GO:0033993">
    <property type="term" value="P:response to lipid"/>
    <property type="evidence" value="ECO:0000270"/>
    <property type="project" value="RGD"/>
</dbReference>
<dbReference type="GO" id="GO:0032496">
    <property type="term" value="P:response to lipopolysaccharide"/>
    <property type="evidence" value="ECO:0000270"/>
    <property type="project" value="RGD"/>
</dbReference>
<dbReference type="GO" id="GO:1904640">
    <property type="term" value="P:response to methionine"/>
    <property type="evidence" value="ECO:0000270"/>
    <property type="project" value="RGD"/>
</dbReference>
<dbReference type="GO" id="GO:0031667">
    <property type="term" value="P:response to nutrient levels"/>
    <property type="evidence" value="ECO:0000270"/>
    <property type="project" value="RGD"/>
</dbReference>
<dbReference type="GO" id="GO:0042594">
    <property type="term" value="P:response to starvation"/>
    <property type="evidence" value="ECO:0000318"/>
    <property type="project" value="GO_Central"/>
</dbReference>
<dbReference type="GO" id="GO:0072350">
    <property type="term" value="P:tricarboxylic acid metabolic process"/>
    <property type="evidence" value="ECO:0000266"/>
    <property type="project" value="RGD"/>
</dbReference>
<dbReference type="CDD" id="cd00819">
    <property type="entry name" value="PEPCK_GTP"/>
    <property type="match status" value="1"/>
</dbReference>
<dbReference type="FunFam" id="3.90.228.20:FF:000005">
    <property type="entry name" value="Phosphoenolpyruvate carboxykinase [GTP], mitochondrial"/>
    <property type="match status" value="1"/>
</dbReference>
<dbReference type="FunFam" id="2.170.8.10:FF:000006">
    <property type="entry name" value="Phosphoenolpyruvate carboxykinase, cytosolic [GTP]"/>
    <property type="match status" value="1"/>
</dbReference>
<dbReference type="FunFam" id="3.40.449.10:FF:000003">
    <property type="entry name" value="Phosphoenolpyruvate carboxykinase, cytosolic [GTP]"/>
    <property type="match status" value="1"/>
</dbReference>
<dbReference type="Gene3D" id="3.90.228.20">
    <property type="match status" value="1"/>
</dbReference>
<dbReference type="Gene3D" id="3.40.449.10">
    <property type="entry name" value="Phosphoenolpyruvate Carboxykinase, domain 1"/>
    <property type="match status" value="1"/>
</dbReference>
<dbReference type="Gene3D" id="2.170.8.10">
    <property type="entry name" value="Phosphoenolpyruvate Carboxykinase, domain 2"/>
    <property type="match status" value="1"/>
</dbReference>
<dbReference type="HAMAP" id="MF_00452">
    <property type="entry name" value="PEPCK_GTP"/>
    <property type="match status" value="1"/>
</dbReference>
<dbReference type="InterPro" id="IPR018091">
    <property type="entry name" value="PEP_carboxykin_GTP_CS"/>
</dbReference>
<dbReference type="InterPro" id="IPR013035">
    <property type="entry name" value="PEP_carboxykinase_C"/>
</dbReference>
<dbReference type="InterPro" id="IPR008209">
    <property type="entry name" value="PEP_carboxykinase_GTP"/>
</dbReference>
<dbReference type="InterPro" id="IPR035077">
    <property type="entry name" value="PEP_carboxykinase_GTP_C"/>
</dbReference>
<dbReference type="InterPro" id="IPR035078">
    <property type="entry name" value="PEP_carboxykinase_GTP_N"/>
</dbReference>
<dbReference type="InterPro" id="IPR008210">
    <property type="entry name" value="PEP_carboxykinase_N"/>
</dbReference>
<dbReference type="NCBIfam" id="NF003253">
    <property type="entry name" value="PRK04210.1"/>
    <property type="match status" value="1"/>
</dbReference>
<dbReference type="PANTHER" id="PTHR11561">
    <property type="entry name" value="PHOSPHOENOLPYRUVATE CARBOXYKINASE"/>
    <property type="match status" value="1"/>
</dbReference>
<dbReference type="PANTHER" id="PTHR11561:SF18">
    <property type="entry name" value="PHOSPHOENOLPYRUVATE CARBOXYKINASE, CYTOSOLIC [GTP]"/>
    <property type="match status" value="1"/>
</dbReference>
<dbReference type="Pfam" id="PF00821">
    <property type="entry name" value="PEPCK_GTP"/>
    <property type="match status" value="1"/>
</dbReference>
<dbReference type="Pfam" id="PF17297">
    <property type="entry name" value="PEPCK_N"/>
    <property type="match status" value="1"/>
</dbReference>
<dbReference type="PIRSF" id="PIRSF001348">
    <property type="entry name" value="PEP_carboxykinase_GTP"/>
    <property type="match status" value="1"/>
</dbReference>
<dbReference type="SUPFAM" id="SSF68923">
    <property type="entry name" value="PEP carboxykinase N-terminal domain"/>
    <property type="match status" value="1"/>
</dbReference>
<dbReference type="SUPFAM" id="SSF53795">
    <property type="entry name" value="PEP carboxykinase-like"/>
    <property type="match status" value="1"/>
</dbReference>
<dbReference type="PROSITE" id="PS00505">
    <property type="entry name" value="PEPCK_GTP"/>
    <property type="match status" value="1"/>
</dbReference>
<gene>
    <name evidence="19 22" type="primary">Pck1</name>
</gene>
<keyword id="KW-0002">3D-structure</keyword>
<keyword id="KW-0007">Acetylation</keyword>
<keyword id="KW-0963">Cytoplasm</keyword>
<keyword id="KW-0210">Decarboxylase</keyword>
<keyword id="KW-0903">Direct protein sequencing</keyword>
<keyword id="KW-0256">Endoplasmic reticulum</keyword>
<keyword id="KW-0312">Gluconeogenesis</keyword>
<keyword id="KW-0342">GTP-binding</keyword>
<keyword id="KW-0418">Kinase</keyword>
<keyword id="KW-0456">Lyase</keyword>
<keyword id="KW-0464">Manganese</keyword>
<keyword id="KW-0479">Metal-binding</keyword>
<keyword id="KW-0547">Nucleotide-binding</keyword>
<keyword id="KW-0597">Phosphoprotein</keyword>
<keyword id="KW-1185">Reference proteome</keyword>
<keyword id="KW-0808">Transferase</keyword>
<keyword id="KW-0832">Ubl conjugation</keyword>
<proteinExistence type="evidence at protein level"/>
<feature type="chain" id="PRO_0000103630" description="Phosphoenolpyruvate carboxykinase, cytosolic [GTP]">
    <location>
        <begin position="1"/>
        <end position="622"/>
    </location>
</feature>
<feature type="region of interest" description="Omega-loop" evidence="13">
    <location>
        <begin position="457"/>
        <end position="487"/>
    </location>
</feature>
<feature type="active site" evidence="9 14">
    <location>
        <position position="288"/>
    </location>
</feature>
<feature type="binding site" evidence="4 7 8 9 10">
    <location>
        <position position="87"/>
    </location>
    <ligand>
        <name>substrate</name>
    </ligand>
</feature>
<feature type="binding site" evidence="5 7 8 9 10">
    <location>
        <begin position="235"/>
        <end position="237"/>
    </location>
    <ligand>
        <name>substrate</name>
    </ligand>
</feature>
<feature type="binding site" evidence="4 5 7 8 9 10 11 12 13 16 24 27 28 29 30 31 32 34 35 36 38">
    <location>
        <position position="244"/>
    </location>
    <ligand>
        <name>Mn(2+)</name>
        <dbReference type="ChEBI" id="CHEBI:29035"/>
    </ligand>
</feature>
<feature type="binding site" evidence="4 5 7 8 9 10 11 12 13 16 24 27 28 29 30 31 32 34 35 36 38">
    <location>
        <position position="264"/>
    </location>
    <ligand>
        <name>Mn(2+)</name>
        <dbReference type="ChEBI" id="CHEBI:29035"/>
    </ligand>
</feature>
<feature type="binding site" evidence="4 5 7 8 9 10">
    <location>
        <position position="286"/>
    </location>
    <ligand>
        <name>substrate</name>
    </ligand>
</feature>
<feature type="binding site" evidence="4 7 8 9 10 11 12 13 24 27 28 29 30 31 34 35 36">
    <location>
        <begin position="287"/>
        <end position="292"/>
    </location>
    <ligand>
        <name>GTP</name>
        <dbReference type="ChEBI" id="CHEBI:37565"/>
    </ligand>
</feature>
<feature type="binding site" evidence="4 5 7 8 9 10 11 12 13 16 24 27 28 29 30 31 32 34 35 36 38">
    <location>
        <position position="311"/>
    </location>
    <ligand>
        <name>Mn(2+)</name>
        <dbReference type="ChEBI" id="CHEBI:29035"/>
    </ligand>
</feature>
<feature type="binding site" evidence="5 7 8 9 10">
    <location>
        <begin position="403"/>
        <end position="405"/>
    </location>
    <ligand>
        <name>substrate</name>
    </ligand>
</feature>
<feature type="binding site" evidence="4 8 9 10 11 12 13 24 27 28 29 30 31 34 35 36">
    <location>
        <position position="405"/>
    </location>
    <ligand>
        <name>GTP</name>
        <dbReference type="ChEBI" id="CHEBI:37565"/>
    </ligand>
</feature>
<feature type="binding site" evidence="4 7 8 9 10 11 12 13 24 27 28 29 30 31 34 35 36">
    <location>
        <position position="436"/>
    </location>
    <ligand>
        <name>GTP</name>
        <dbReference type="ChEBI" id="CHEBI:37565"/>
    </ligand>
</feature>
<feature type="binding site" evidence="4 7 8 9 10 11 12 13 24 27 28 29 30 31 34 35 36">
    <location>
        <begin position="530"/>
        <end position="533"/>
    </location>
    <ligand>
        <name>GTP</name>
        <dbReference type="ChEBI" id="CHEBI:37565"/>
    </ligand>
</feature>
<feature type="modified residue" description="Phosphoserine" evidence="39">
    <location>
        <position position="19"/>
    </location>
</feature>
<feature type="modified residue" description="N6-acetyllysine; by p300/EP300" evidence="1">
    <location>
        <position position="70"/>
    </location>
</feature>
<feature type="modified residue" description="N6-acetyllysine; by p300/EP300" evidence="1">
    <location>
        <position position="71"/>
    </location>
</feature>
<feature type="modified residue" description="Phosphoserine" evidence="1">
    <location>
        <position position="90"/>
    </location>
</feature>
<feature type="modified residue" description="N6-acetyllysine; by p300/EP300" evidence="1 15">
    <location>
        <position position="91"/>
    </location>
</feature>
<feature type="modified residue" description="Phosphoserine" evidence="39">
    <location>
        <position position="118"/>
    </location>
</feature>
<feature type="modified residue" description="Phosphothreonine" evidence="2">
    <location>
        <position position="178"/>
    </location>
</feature>
<feature type="modified residue" description="Phosphoserine" evidence="2">
    <location>
        <position position="286"/>
    </location>
</feature>
<feature type="modified residue" description="N6-acetyllysine" evidence="15">
    <location>
        <position position="473"/>
    </location>
</feature>
<feature type="modified residue" description="N6-acetyllysine" evidence="15">
    <location>
        <position position="521"/>
    </location>
</feature>
<feature type="modified residue" description="N6-acetyllysine" evidence="15">
    <location>
        <position position="524"/>
    </location>
</feature>
<feature type="modified residue" description="N6-acetyllysine; by p300/EP300" evidence="1">
    <location>
        <position position="594"/>
    </location>
</feature>
<feature type="mutagenesis site" description="Abolished phosphoenolpyruvate carboxykinase activity; decreased affinity for oxaloacetate." evidence="12">
    <original>E</original>
    <variation>A</variation>
    <variation>D</variation>
    <variation>Q</variation>
    <location>
        <position position="89"/>
    </location>
</feature>
<feature type="mutagenesis site" description="Decreased phosphorylation and increased acetylation levels." evidence="15">
    <original>S</original>
    <variation>A</variation>
    <location>
        <position position="90"/>
    </location>
</feature>
<feature type="mutagenesis site" description="3-fold decrease of affinity for phosphoenolpyruvate." evidence="15">
    <original>K</original>
    <variation>Q</variation>
    <location>
        <position position="91"/>
    </location>
</feature>
<feature type="mutagenesis site" description="Destabilization of the closed state of the omega-loop, resulting in decreased capture rates for the weaker binding substrates associated with catalysis in the phosphoenolpyruvate to oxaloacetate direction." evidence="13">
    <original>H</original>
    <variation>R</variation>
    <location>
        <position position="477"/>
    </location>
</feature>
<feature type="strand" evidence="43">
    <location>
        <begin position="5"/>
        <end position="9"/>
    </location>
</feature>
<feature type="helix" evidence="43">
    <location>
        <begin position="12"/>
        <end position="14"/>
    </location>
</feature>
<feature type="strand" evidence="43">
    <location>
        <begin position="15"/>
        <end position="18"/>
    </location>
</feature>
<feature type="helix" evidence="43">
    <location>
        <begin position="20"/>
        <end position="22"/>
    </location>
</feature>
<feature type="helix" evidence="43">
    <location>
        <begin position="25"/>
        <end position="38"/>
    </location>
</feature>
<feature type="strand" evidence="43">
    <location>
        <begin position="40"/>
        <end position="45"/>
    </location>
</feature>
<feature type="helix" evidence="43">
    <location>
        <begin position="50"/>
        <end position="62"/>
    </location>
</feature>
<feature type="strand" evidence="44">
    <location>
        <begin position="65"/>
        <end position="69"/>
    </location>
</feature>
<feature type="strand" evidence="43">
    <location>
        <begin position="72"/>
        <end position="74"/>
    </location>
</feature>
<feature type="strand" evidence="43">
    <location>
        <begin position="76"/>
        <end position="78"/>
    </location>
</feature>
<feature type="strand" evidence="43">
    <location>
        <begin position="84"/>
        <end position="86"/>
    </location>
</feature>
<feature type="helix" evidence="43">
    <location>
        <begin position="89"/>
        <end position="91"/>
    </location>
</feature>
<feature type="strand" evidence="43">
    <location>
        <begin position="92"/>
        <end position="95"/>
    </location>
</feature>
<feature type="helix" evidence="43">
    <location>
        <begin position="99"/>
        <end position="102"/>
    </location>
</feature>
<feature type="strand" evidence="43">
    <location>
        <begin position="107"/>
        <end position="109"/>
    </location>
</feature>
<feature type="helix" evidence="43">
    <location>
        <begin position="119"/>
        <end position="127"/>
    </location>
</feature>
<feature type="turn" evidence="43">
    <location>
        <begin position="131"/>
        <end position="134"/>
    </location>
</feature>
<feature type="strand" evidence="43">
    <location>
        <begin position="137"/>
        <end position="148"/>
    </location>
</feature>
<feature type="strand" evidence="43">
    <location>
        <begin position="155"/>
        <end position="162"/>
    </location>
</feature>
<feature type="helix" evidence="43">
    <location>
        <begin position="164"/>
        <end position="173"/>
    </location>
</feature>
<feature type="strand" evidence="43">
    <location>
        <begin position="174"/>
        <end position="177"/>
    </location>
</feature>
<feature type="helix" evidence="43">
    <location>
        <begin position="178"/>
        <end position="184"/>
    </location>
</feature>
<feature type="strand" evidence="43">
    <location>
        <begin position="190"/>
        <end position="195"/>
    </location>
</feature>
<feature type="helix" evidence="43">
    <location>
        <begin position="214"/>
        <end position="216"/>
    </location>
</feature>
<feature type="strand" evidence="43">
    <location>
        <begin position="218"/>
        <end position="222"/>
    </location>
</feature>
<feature type="helix" evidence="43">
    <location>
        <begin position="223"/>
        <end position="225"/>
    </location>
</feature>
<feature type="strand" evidence="43">
    <location>
        <begin position="227"/>
        <end position="232"/>
    </location>
</feature>
<feature type="helix" evidence="43">
    <location>
        <begin position="236"/>
        <end position="239"/>
    </location>
</feature>
<feature type="helix" evidence="43">
    <location>
        <begin position="242"/>
        <end position="248"/>
    </location>
</feature>
<feature type="helix" evidence="43">
    <location>
        <begin position="249"/>
        <end position="258"/>
    </location>
</feature>
<feature type="strand" evidence="43">
    <location>
        <begin position="261"/>
        <end position="264"/>
    </location>
</feature>
<feature type="strand" evidence="43">
    <location>
        <begin position="266"/>
        <end position="271"/>
    </location>
</feature>
<feature type="strand" evidence="43">
    <location>
        <begin position="277"/>
        <end position="283"/>
    </location>
</feature>
<feature type="strand" evidence="46">
    <location>
        <begin position="286"/>
        <end position="289"/>
    </location>
</feature>
<feature type="helix" evidence="43">
    <location>
        <begin position="290"/>
        <end position="294"/>
    </location>
</feature>
<feature type="strand" evidence="43">
    <location>
        <begin position="304"/>
        <end position="311"/>
    </location>
</feature>
<feature type="strand" evidence="43">
    <location>
        <begin position="313"/>
        <end position="317"/>
    </location>
</feature>
<feature type="strand" evidence="43">
    <location>
        <begin position="323"/>
        <end position="326"/>
    </location>
</feature>
<feature type="strand" evidence="43">
    <location>
        <begin position="330"/>
        <end position="335"/>
    </location>
</feature>
<feature type="turn" evidence="43">
    <location>
        <begin position="341"/>
        <end position="343"/>
    </location>
</feature>
<feature type="helix" evidence="43">
    <location>
        <begin position="345"/>
        <end position="350"/>
    </location>
</feature>
<feature type="strand" evidence="43">
    <location>
        <begin position="356"/>
        <end position="359"/>
    </location>
</feature>
<feature type="strand" evidence="43">
    <location>
        <begin position="361"/>
        <end position="363"/>
    </location>
</feature>
<feature type="strand" evidence="43">
    <location>
        <begin position="388"/>
        <end position="391"/>
    </location>
</feature>
<feature type="strand" evidence="43">
    <location>
        <begin position="395"/>
        <end position="397"/>
    </location>
</feature>
<feature type="strand" evidence="43">
    <location>
        <begin position="405"/>
        <end position="409"/>
    </location>
</feature>
<feature type="helix" evidence="43">
    <location>
        <begin position="410"/>
        <end position="412"/>
    </location>
</feature>
<feature type="turn" evidence="43">
    <location>
        <begin position="418"/>
        <end position="421"/>
    </location>
</feature>
<feature type="strand" evidence="43">
    <location>
        <begin position="426"/>
        <end position="434"/>
    </location>
</feature>
<feature type="strand" evidence="43">
    <location>
        <begin position="438"/>
        <end position="440"/>
    </location>
</feature>
<feature type="strand" evidence="43">
    <location>
        <begin position="443"/>
        <end position="446"/>
    </location>
</feature>
<feature type="helix" evidence="43">
    <location>
        <begin position="450"/>
        <end position="458"/>
    </location>
</feature>
<feature type="strand" evidence="43">
    <location>
        <begin position="461"/>
        <end position="463"/>
    </location>
</feature>
<feature type="strand" evidence="41">
    <location>
        <begin position="466"/>
        <end position="469"/>
    </location>
</feature>
<feature type="strand" evidence="42">
    <location>
        <begin position="475"/>
        <end position="477"/>
    </location>
</feature>
<feature type="helix" evidence="43">
    <location>
        <begin position="479"/>
        <end position="481"/>
    </location>
</feature>
<feature type="turn" evidence="43">
    <location>
        <begin position="483"/>
        <end position="485"/>
    </location>
</feature>
<feature type="helix" evidence="43">
    <location>
        <begin position="490"/>
        <end position="499"/>
    </location>
</feature>
<feature type="helix" evidence="43">
    <location>
        <begin position="500"/>
        <end position="502"/>
    </location>
</feature>
<feature type="strand" evidence="43">
    <location>
        <begin position="510"/>
        <end position="514"/>
    </location>
</feature>
<feature type="strand" evidence="40">
    <location>
        <begin position="521"/>
        <end position="523"/>
    </location>
</feature>
<feature type="strand" evidence="43">
    <location>
        <begin position="525"/>
        <end position="527"/>
    </location>
</feature>
<feature type="helix" evidence="43">
    <location>
        <begin position="530"/>
        <end position="533"/>
    </location>
</feature>
<feature type="helix" evidence="43">
    <location>
        <begin position="534"/>
        <end position="544"/>
    </location>
</feature>
<feature type="strand" evidence="43">
    <location>
        <begin position="550"/>
        <end position="553"/>
    </location>
</feature>
<feature type="strand" evidence="43">
    <location>
        <begin position="556"/>
        <end position="559"/>
    </location>
</feature>
<feature type="turn" evidence="43">
    <location>
        <begin position="561"/>
        <end position="563"/>
    </location>
</feature>
<feature type="turn" evidence="45">
    <location>
        <begin position="567"/>
        <end position="569"/>
    </location>
</feature>
<feature type="helix" evidence="43">
    <location>
        <begin position="574"/>
        <end position="578"/>
    </location>
</feature>
<feature type="helix" evidence="43">
    <location>
        <begin position="582"/>
        <end position="599"/>
    </location>
</feature>
<feature type="helix" evidence="43">
    <location>
        <begin position="601"/>
        <end position="603"/>
    </location>
</feature>
<feature type="helix" evidence="43">
    <location>
        <begin position="606"/>
        <end position="620"/>
    </location>
</feature>
<comment type="function">
    <text evidence="1 3 11 12 13 15 16 17">Cytosolic phosphoenolpyruvate carboxykinase that catalyzes the reversible decarboxylation and phosphorylation of oxaloacetate (OAA) and acts as the rate-limiting enzyme in gluconeogenesis (PubMed:26322521, PubMed:26709450, PubMed:28345895, PubMed:30193097, PubMed:31461616, PubMed:4186849). Regulates cataplerosis and anaplerosis, the processes that control the levels of metabolic intermediates in the citric acid cycle (PubMed:30193097). At low glucose levels, it catalyzes the cataplerotic conversion of oxaloacetate to phosphoenolpyruvate (PEP), the rate-limiting step in the metabolic pathway that produces glucose from lactate and other precursors derived from the citric acid cycle (PubMed:30193097). At high glucose levels, it catalyzes the anaplerotic conversion of phosphoenolpyruvate to oxaloacetate (PubMed:30193097). Acts as a regulator of formation and maintenance of memory CD8(+) T-cells: up-regulated in these cells, where it generates phosphoenolpyruvate, via gluconeogenesis (By similarity). The resultant phosphoenolpyruvate flows to glycogen and pentose phosphate pathway, which is essential for memory CD8(+) T-cells homeostasis (By similarity). In addition to the phosphoenolpyruvate carboxykinase activity, also acts as a protein kinase when phosphorylated at Ser-90: phosphorylation at Ser-90 by AKT1 reduces the binding affinity to oxaloacetate and promotes an atypical serine protein kinase activity using GTP as donor (By similarity). The protein kinase activity regulates lipogenesis: upon phosphorylation at Ser-90, translocates to the endoplasmic reticulum and catalyzes phosphorylation of INSIG proteins (INSIG1 and INSIG2), thereby disrupting the interaction between INSIG proteins and SCAP and promoting nuclear translocation of SREBP proteins (SREBF1/SREBP1 or SREBF2/SREBP2) and subsequent transcription of downstream lipogenesis-related genes (By similarity).</text>
</comment>
<comment type="catalytic activity">
    <reaction evidence="11 12 13 15 16">
        <text>oxaloacetate + GTP = phosphoenolpyruvate + GDP + CO2</text>
        <dbReference type="Rhea" id="RHEA:10388"/>
        <dbReference type="ChEBI" id="CHEBI:16452"/>
        <dbReference type="ChEBI" id="CHEBI:16526"/>
        <dbReference type="ChEBI" id="CHEBI:37565"/>
        <dbReference type="ChEBI" id="CHEBI:58189"/>
        <dbReference type="ChEBI" id="CHEBI:58702"/>
        <dbReference type="EC" id="4.1.1.32"/>
    </reaction>
    <physiologicalReaction direction="left-to-right" evidence="11 15">
        <dbReference type="Rhea" id="RHEA:10389"/>
    </physiologicalReaction>
    <physiologicalReaction direction="right-to-left" evidence="11 13 15">
        <dbReference type="Rhea" id="RHEA:10390"/>
    </physiologicalReaction>
</comment>
<comment type="catalytic activity">
    <reaction evidence="1">
        <text>L-seryl-[protein] + GTP = O-phospho-L-seryl-[protein] + GDP + H(+)</text>
        <dbReference type="Rhea" id="RHEA:64020"/>
        <dbReference type="Rhea" id="RHEA-COMP:9863"/>
        <dbReference type="Rhea" id="RHEA-COMP:11604"/>
        <dbReference type="ChEBI" id="CHEBI:15378"/>
        <dbReference type="ChEBI" id="CHEBI:29999"/>
        <dbReference type="ChEBI" id="CHEBI:37565"/>
        <dbReference type="ChEBI" id="CHEBI:58189"/>
        <dbReference type="ChEBI" id="CHEBI:83421"/>
    </reaction>
    <physiologicalReaction direction="left-to-right" evidence="1">
        <dbReference type="Rhea" id="RHEA:64021"/>
    </physiologicalReaction>
</comment>
<comment type="cofactor">
    <cofactor evidence="4 5 7 8 9 10 11 12 13">
        <name>Mn(2+)</name>
        <dbReference type="ChEBI" id="CHEBI:29035"/>
    </cofactor>
    <text evidence="4 5 7 8 9 10 11 12 13">Binds 1 Mn(2+) ion per subunit.</text>
</comment>
<comment type="activity regulation">
    <text evidence="1 11 15 16">Phosphoenolpyruvate carboxykinase activity is regulated by acetylation and glucose levels (PubMed:30193097). The anaplerotic conversion of phosphoenolpyruvate to oxaloacetate is improved by PCK1 acetylation on Lys-91 (K91ac), Lys-473 (K473ac) and Lys-521 (K521ac) (PubMed:30193097). High glucose concentrations favor PCK1 anaplerotic activity by triggering acetylation on Lys-91 (K91ac). At low glucose levels, SIRT1-mediated deacetylation of Lys-91 promotes the cataplerotic conversion of oxaloacetate to phosphoenolpyruvate (By similarity). Phosphoenolpyruvate carboxykinase activity is inhibited by 3-mercaptopicolinate (PubMed:26322521). Phosphoenolpyruvate carboxykinase activity is inhibited by 3-[(carboxymethyl)thio]picolinate (CMP), which acts as a competitive inhibitor at the oxaloacetate/phosphoenolpyruvate-binding site (PubMed:31461616). Phosphorylation at Ser-90 reduces the binding affinity to oxaloacetate and converts the enzyme into an atypical protein kinase using GTP as donor (By similarity).</text>
</comment>
<comment type="biophysicochemical properties">
    <kinetics>
        <KM evidence="15">39 uM for oxaloacetate</KM>
        <KM evidence="15">161 uM for GTP</KM>
        <KM evidence="15">301 uM for phosphoenolpyruvate</KM>
        <KM evidence="15">79 uM for GDP</KM>
        <KM evidence="12">475 uM for phosphoenolpyruvate (for phosphoenolpyruvate carboxykinase in the backward reaction)</KM>
        <KM evidence="12">207 uM for GDP (for phosphoenolpyruvate carboxykinase in the backward reaction)</KM>
        <KM evidence="12">435 uM for CO2 (for phosphoenolpyruvate carboxykinase in the backward reaction)</KM>
        <KM evidence="12">51 uM for oxaloacetate (for phosphoenolpyruvate carboxykinase in the forward reaction)</KM>
        <KM evidence="12">55 uM for GTP (for phosphoenolpyruvate carboxykinase in the forward reaction)</KM>
        <text evidence="12 15">kcat is 76 sec(-1) with oxaloacetate as substrate (PubMed:30193097). kcat is 27 sec(-1) with phosphoenolpyruvate as substrate (PubMed:30193097). kcat is 65 sec(-1) with GTP as substrate (PubMed:30193097). kcat is 25 sec(-1) with GDP as substrate (PubMed:30193097). kcat is 52 sec(-1) with phosphoenolpyruvate carboxykinase in the forward reaction (PubMed:26709450). kcat is 19 sec(-1) with phosphoenolpyruvate carboxykinase in the backward forward reaction (PubMed:26709450).</text>
    </kinetics>
</comment>
<comment type="pathway">
    <text evidence="15">Carbohydrate biosynthesis; gluconeogenesis.</text>
</comment>
<comment type="subunit">
    <text evidence="4 5 7 8 10 11 12 16">Monomer.</text>
</comment>
<comment type="subcellular location">
    <subcellularLocation>
        <location evidence="21">Cytoplasm</location>
        <location evidence="21">Cytosol</location>
    </subcellularLocation>
    <subcellularLocation>
        <location evidence="1">Endoplasmic reticulum</location>
    </subcellularLocation>
    <text evidence="1">Phosphorylation at Ser-90 promotes translocation to the endoplasmic reticulum.</text>
</comment>
<comment type="induction">
    <text evidence="6 18">Regulated by cAMP, dexamethasone, glucagon and by insulin. Dexamthasone, glucagon and cAMP increase levels, insulin decreases levels.</text>
</comment>
<comment type="PTM">
    <text evidence="1 15">Acetylated (PubMed:30193097). Lysine acetylation by p300/EP300 is increased on high glucose conditions and promotes ubiquitination by UBR5; acetylation is enhanced in the presence of BAG6. Deacetylated by SIRT2. Deacetylation of Lys-91 is carried out by SIRT1 and depends on PCK1 phosphorylation levels (By similarity).</text>
</comment>
<comment type="PTM">
    <text evidence="1 15">Phosphorylated in a GSK3B-mediated pathway; phosphorylation affects the efficiency of SIRT1-mediated deacetylation, and regulates PCK1 ubiquitination and degradation (PubMed:30193097). Phosphorylation at Ser-90 by AKT1 reduces the binding affinity to oxaloacetate and promotes the protein kinase activity: phosphorylated PCK1 translocates to the endoplasmic reticulum, where it phosphorylates INSIG1 and INSIG2 (By similarity).</text>
</comment>
<comment type="PTM">
    <text evidence="1">Ubiquitination by UBR5 leads to proteasomal degradation.</text>
</comment>
<comment type="miscellaneous">
    <text evidence="20">In eukaryotes there are two isozymes: a cytoplasmic one and a mitochondrial one.</text>
</comment>
<comment type="similarity">
    <text evidence="20">Belongs to the phosphoenolpyruvate carboxykinase [GTP] family.</text>
</comment>
<accession>P07379</accession>
<protein>
    <recommendedName>
        <fullName evidence="20">Phosphoenolpyruvate carboxykinase, cytosolic [GTP]</fullName>
        <shortName>PEPCK-C</shortName>
        <ecNumber evidence="11 12 13 15 16">4.1.1.32</ecNumber>
    </recommendedName>
    <alternativeName>
        <fullName evidence="20">Serine-protein kinase PCK1</fullName>
        <ecNumber evidence="1">2.7.11.-</ecNumber>
    </alternativeName>
</protein>
<reference key="1">
    <citation type="journal article" date="1985" name="J. Biol. Chem.">
        <title>Rat hepatic cytosolic phosphoenolpyruvate carboxykinase (GTP). Structures of the protein, messenger RNA, and gene.</title>
        <authorList>
            <person name="Beale E.G."/>
            <person name="Chrapkiewicz N.B."/>
            <person name="Scoble H.A."/>
            <person name="Metz R.J."/>
            <person name="Quick D.P."/>
            <person name="Noble R.L."/>
            <person name="Donelson J.E."/>
            <person name="Biemann K."/>
            <person name="Granner D.K."/>
        </authorList>
    </citation>
    <scope>NUCLEOTIDE SEQUENCE [GENOMIC DNA]</scope>
    <source>
        <tissue>Liver</tissue>
    </source>
</reference>
<reference key="2">
    <citation type="journal article" date="2004" name="Genome Res.">
        <title>The status, quality, and expansion of the NIH full-length cDNA project: the Mammalian Gene Collection (MGC).</title>
        <authorList>
            <consortium name="The MGC Project Team"/>
        </authorList>
    </citation>
    <scope>NUCLEOTIDE SEQUENCE [LARGE SCALE MRNA]</scope>
    <source>
        <tissue>Kidney</tissue>
    </source>
</reference>
<reference key="3">
    <citation type="journal article" date="1989" name="J. Biol. Chem.">
        <title>Cysteine 288: an essential hyperreactive thiol of cytosolic phosphoenolpyruvate carboxykinase (GTP).</title>
        <authorList>
            <person name="Lewis C.T."/>
            <person name="Seyer J.M."/>
            <person name="Carlson G.M."/>
        </authorList>
    </citation>
    <scope>PROTEIN SEQUENCE OF 279-290</scope>
    <scope>ACTIVE SITE</scope>
    <source>
        <tissue>Liver</tissue>
    </source>
</reference>
<reference key="4">
    <citation type="journal article" date="1969" name="J. Biol. Chem.">
        <title>Purification of phosphoenolpyruvate carboxykinase from the cytosol fraction of rat liver and the immunochemical demonstration of differences between this enzyme and the mitochondrial phosphoenolpyruvate carboxykinase.</title>
        <authorList>
            <person name="Ballard F.J."/>
            <person name="Hanson R.W."/>
        </authorList>
    </citation>
    <scope>FUNCTION</scope>
    <scope>SUBCELLULAR LOCATION</scope>
</reference>
<reference key="5">
    <citation type="journal article" date="1984" name="J. Biol. Chem.">
        <title>Multihormonal regulation of phosphoenolpyruvate carboxykinase gene transcription. The dominant role of insulin.</title>
        <authorList>
            <person name="Sasaki K."/>
            <person name="Cripe T.P."/>
            <person name="Koch S.R."/>
            <person name="Andreone T.L."/>
            <person name="Petersen D.D."/>
            <person name="Beale E.G."/>
            <person name="Granner D.K."/>
        </authorList>
    </citation>
    <scope>INDUCTION</scope>
</reference>
<reference key="6">
    <citation type="journal article" date="2008" name="Horm. Metab. Res.">
        <title>Inhibition of glucagon-signaling and downstream actions by interleukin 1beta and tumor necrosis factor alpha in cultured primary rat hepatocytes.</title>
        <authorList>
            <person name="Christ B."/>
        </authorList>
    </citation>
    <scope>INDUCTION</scope>
</reference>
<reference key="7">
    <citation type="journal article" date="2012" name="Nat. Commun.">
        <title>Quantitative maps of protein phosphorylation sites across 14 different rat organs and tissues.</title>
        <authorList>
            <person name="Lundby A."/>
            <person name="Secher A."/>
            <person name="Lage K."/>
            <person name="Nordsborg N.B."/>
            <person name="Dmytriyev A."/>
            <person name="Lundby C."/>
            <person name="Olsen J.V."/>
        </authorList>
    </citation>
    <scope>PHOSPHORYLATION [LARGE SCALE ANALYSIS] AT SER-19 AND SER-118</scope>
    <scope>IDENTIFICATION BY MASS SPECTROMETRY [LARGE SCALE ANALYSIS]</scope>
</reference>
<reference key="8">
    <citation type="journal article" date="2018" name="Mol. Cell">
        <title>Dynamic acetylation of phosphoenolpyruvate carboxykinase toggles enzyme activity between gluconeogenic and anaplerotic reactions.</title>
        <authorList>
            <person name="Latorre-Muro P."/>
            <person name="Baeza J."/>
            <person name="Armstrong E.A."/>
            <person name="Hurtado-Guerrero R."/>
            <person name="Corzana F."/>
            <person name="Wu L.E."/>
            <person name="Sinclair D.A."/>
            <person name="Lopez-Buesa P."/>
            <person name="Carrodeguas J.A."/>
            <person name="Denu J.M."/>
        </authorList>
    </citation>
    <scope>FUNCTION</scope>
    <scope>PATHWAY</scope>
    <scope>CATALYTIC ACTIVITY</scope>
    <scope>BIOPHYSICOCHEMICAL PROPERTIES</scope>
    <scope>ACTIVITY REGULATION</scope>
    <scope>ACETYLATION AT LYS-91; LYS-473; LYS-521 AND LYS-524</scope>
    <scope>PHOSPHORYLATION</scope>
    <scope>MUTAGENESIS OF SER-90 AND LYS-91</scope>
</reference>
<reference key="9">
    <citation type="journal article" date="2007" name="Biochemistry">
        <title>Structures of rat cytosolic PEPCK: insight into the mechanism of phosphorylation and decarboxylation of oxaloacetic acid.</title>
        <authorList>
            <person name="Sullivan S.M."/>
            <person name="Holyoak T."/>
        </authorList>
    </citation>
    <scope>X-RAY CRYSTALLOGRAPHY (1.65 ANGSTROMS) OF APOENZYME AND IN COMPLEX WITH MANGANESE; GTP AND SUBSTRATE</scope>
    <scope>COFACTOR</scope>
    <scope>SUBUNIT</scope>
    <scope>REACTION MECHANISM</scope>
</reference>
<reference key="10">
    <citation type="journal article" date="2008" name="Biochemistry">
        <title>Differential inhibition of cytosolic PEPCK by substrate analogues. Kinetic and structural characterization of inhibitor recognition.</title>
        <authorList>
            <person name="Stiffin R.M."/>
            <person name="Sullivan S.M."/>
            <person name="Carlson G.M."/>
            <person name="Holyoak T."/>
        </authorList>
    </citation>
    <scope>X-RAY CRYSTALLOGRAPHY (1.80 ANGSTROMS) IN COMPLEX WITH MANGANESE AND SUBSTRATE ANALOG</scope>
    <scope>COFACTOR</scope>
    <scope>SUBUNIT</scope>
</reference>
<reference key="11">
    <citation type="journal article" date="2008" name="Proc. Natl. Acad. Sci. U.S.A.">
        <title>Enzymes with lid-gated active sites must operate by an induced fit mechanism instead of conformational selection.</title>
        <authorList>
            <person name="Sullivan S.M."/>
            <person name="Holyoak T."/>
        </authorList>
    </citation>
    <scope>X-RAY CRYSTALLOGRAPHY (1.3 ANGSTROMS) OF APOENZYME AND IN COMPLEX WITH MANGANESE; GTP AND SUBSTRATE</scope>
    <scope>COFACTOR</scope>
    <scope>SUBUNIT</scope>
    <scope>REACTION MECHANISM</scope>
</reference>
<reference key="12">
    <citation type="journal article" date="2010" name="Biochemistry">
        <title>Increasing the conformational entropy of the Omega-loop lid domain in phosphoenolpyruvate carboxykinase impairs catalysis and decreases catalytic fidelity.</title>
        <authorList>
            <person name="Johnson T.A."/>
            <person name="Holyoak T."/>
        </authorList>
    </citation>
    <scope>X-RAY CRYSTALLOGRAPHY (1.25 ANGSTROMS) IN COMPLEX WITH MANGANESE; GTP AND SUBSTRATES</scope>
    <scope>COFACTOR</scope>
    <scope>SUBUNIT</scope>
</reference>
<reference key="13">
    <citation type="journal article" date="2012" name="Biochemistry">
        <title>The Omega-loop lid domain of phosphoenolpyruvate carboxykinase is essential for catalytic function.</title>
        <authorList>
            <person name="Johnson T.A."/>
            <person name="Holyoak T."/>
        </authorList>
    </citation>
    <scope>X-RAY CRYSTALLOGRAPHY (1.20 ANGSTROMS) OF 1-463 AND 475-622 IN COMPLEX WITH MANGANESE; GTP AND SUBSTRATES</scope>
    <scope>COFACTOR</scope>
    <scope>ACTIVE SITE</scope>
</reference>
<reference key="14">
    <citation type="journal article" date="2014" name="Mol. Genet. Metab.">
        <title>Three rare diseases in one sib pair: RAI1, PCK1, GRIN2B mutations associated with Smith-Magenis Syndrome, cytosolic PEPCK deficiency and NMDA receptor glutamate insensitivity.</title>
        <authorList>
            <person name="Adams D.R."/>
            <person name="Yuan H."/>
            <person name="Holyoak T."/>
            <person name="Arajs K.H."/>
            <person name="Hakimi P."/>
            <person name="Markello T.C."/>
            <person name="Wolfe L.A."/>
            <person name="Vilboux T."/>
            <person name="Burton B.K."/>
            <person name="Fajardo K.F."/>
            <person name="Grahame G."/>
            <person name="Holloman C."/>
            <person name="Sincan M."/>
            <person name="Smith A.C."/>
            <person name="Wells G.A."/>
            <person name="Huang Y."/>
            <person name="Vega H."/>
            <person name="Snyder J.P."/>
            <person name="Golas G.A."/>
            <person name="Tifft C.J."/>
            <person name="Boerkoel C.F."/>
            <person name="Hanson R.W."/>
            <person name="Traynelis S.F."/>
            <person name="Kerr D.S."/>
            <person name="Gahl W.A."/>
        </authorList>
    </citation>
    <scope>X-RAY CRYSTALLOGRAPHY (2.00 ANGSTROMS) IN COMPLEX WITH MANGANESE; GTP AND SUBSTRATE</scope>
    <scope>COFACTOR</scope>
    <scope>SUBUNIT</scope>
</reference>
<reference evidence="23 24 25 26" key="15">
    <citation type="journal article" date="2015" name="Biochemistry">
        <title>Inhibition and allosteric regulation of monomeric phosphoenolpyruvate carboxykinase by 3-mercaptopicolinic acid.</title>
        <authorList>
            <person name="Balan M.D."/>
            <person name="Mcleod M.J."/>
            <person name="Lotosky W.R."/>
            <person name="Ghaly M."/>
            <person name="Holyoak T."/>
        </authorList>
    </citation>
    <scope>X-RAY CRYSTALLOGRAPHY (1.40 ANGSTROMS) IN COMPLEX WITH 3-MERCAPTOPICOLINATE; GTP AND MANGANESE</scope>
    <scope>FUNCTION</scope>
    <scope>CATALYTIC ACTIVITY</scope>
    <scope>COFACTOR</scope>
    <scope>SUBUNIT</scope>
    <scope>ACTIVITY REGULATION</scope>
</reference>
<reference evidence="27 28 29 30 31 32" key="16">
    <citation type="journal article" date="2016" name="Biochemistry">
        <title>Utilization of substrate intrinsic binding energy for conformational change and catalytic function in phosphoenolpyruvate carboxykinase.</title>
        <authorList>
            <person name="Johnson T.A."/>
            <person name="Mcleod M.J."/>
            <person name="Holyoak T."/>
        </authorList>
    </citation>
    <scope>X-RAY CRYSTALLOGRAPHY (1.49 ANGSTROMS) IN COMPLEX WITH GTP AND MANGANESE</scope>
    <scope>FUNCTION</scope>
    <scope>CATALYTIC ACTIVITY</scope>
    <scope>BIOPHYSICOCHEMICAL PROPERTIES</scope>
    <scope>COFACTOR</scope>
    <scope>SUBUNIT</scope>
    <scope>MUTAGENESIS OF GLU-89</scope>
</reference>
<reference evidence="33 34 35 36 37" key="17">
    <citation type="journal article" date="2017" name="Biochemistry">
        <title>Asymmetric anchoring is required for efficient omega-loop opening and closing in cytosolic phosphoenolpyruvate carboxykinase.</title>
        <authorList>
            <person name="Cui D.S."/>
            <person name="Broom A."/>
            <person name="Mcleod M.J."/>
            <person name="Meiering E.M."/>
            <person name="Holyoak T."/>
        </authorList>
    </citation>
    <scope>X-RAY CRYSTALLOGRAPHY (1.80 ANGSTROMS) IN COMPLEX WITH GTP AND MANGANESE</scope>
    <scope>FUNCTION</scope>
    <scope>CATALYTIC ACTIVITY</scope>
    <scope>COFACTOR</scope>
    <scope>SUBUNIT</scope>
    <scope>ACTIVITY REGULATION</scope>
    <scope>MUTAGENESIS OF HIS-477</scope>
</reference>
<reference evidence="38" key="18">
    <citation type="journal article" date="2019" name="Biochemistry">
        <title>Characterization of 3-[(carboxymethyl)thio]picolinic acid: a novel inhibitor of phosphoenolpyruvate carboxykinase.</title>
        <authorList>
            <person name="Mcleod M.J."/>
            <person name="Krismanich A.P."/>
            <person name="Assoud A."/>
            <person name="Dmitrienko G.I."/>
            <person name="Holyoak T."/>
        </authorList>
    </citation>
    <scope>X-RAY CRYSTALLOGRAPHY (1.49 ANGSTROMS) IN COMPLEX WITH 3-[(CARBOXYMETHYL)THIO]PICOLINATE AND MANGANESE</scope>
</reference>
<evidence type="ECO:0000250" key="1">
    <source>
        <dbReference type="UniProtKB" id="P35558"/>
    </source>
</evidence>
<evidence type="ECO:0000250" key="2">
    <source>
        <dbReference type="UniProtKB" id="Q16822"/>
    </source>
</evidence>
<evidence type="ECO:0000250" key="3">
    <source>
        <dbReference type="UniProtKB" id="Q9Z2V4"/>
    </source>
</evidence>
<evidence type="ECO:0000269" key="4">
    <source>
    </source>
</evidence>
<evidence type="ECO:0000269" key="5">
    <source>
    </source>
</evidence>
<evidence type="ECO:0000269" key="6">
    <source>
    </source>
</evidence>
<evidence type="ECO:0000269" key="7">
    <source>
    </source>
</evidence>
<evidence type="ECO:0000269" key="8">
    <source>
    </source>
</evidence>
<evidence type="ECO:0000269" key="9">
    <source>
    </source>
</evidence>
<evidence type="ECO:0000269" key="10">
    <source>
    </source>
</evidence>
<evidence type="ECO:0000269" key="11">
    <source>
    </source>
</evidence>
<evidence type="ECO:0000269" key="12">
    <source>
    </source>
</evidence>
<evidence type="ECO:0000269" key="13">
    <source>
    </source>
</evidence>
<evidence type="ECO:0000269" key="14">
    <source>
    </source>
</evidence>
<evidence type="ECO:0000269" key="15">
    <source>
    </source>
</evidence>
<evidence type="ECO:0000269" key="16">
    <source>
    </source>
</evidence>
<evidence type="ECO:0000269" key="17">
    <source>
    </source>
</evidence>
<evidence type="ECO:0000269" key="18">
    <source>
    </source>
</evidence>
<evidence type="ECO:0000303" key="19">
    <source>
    </source>
</evidence>
<evidence type="ECO:0000305" key="20"/>
<evidence type="ECO:0000305" key="21">
    <source>
    </source>
</evidence>
<evidence type="ECO:0000312" key="22">
    <source>
        <dbReference type="RGD" id="3267"/>
    </source>
</evidence>
<evidence type="ECO:0007744" key="23">
    <source>
        <dbReference type="PDB" id="4YW8"/>
    </source>
</evidence>
<evidence type="ECO:0007744" key="24">
    <source>
        <dbReference type="PDB" id="4YW9"/>
    </source>
</evidence>
<evidence type="ECO:0007744" key="25">
    <source>
        <dbReference type="PDB" id="4YWB"/>
    </source>
</evidence>
<evidence type="ECO:0007744" key="26">
    <source>
        <dbReference type="PDB" id="4YWD"/>
    </source>
</evidence>
<evidence type="ECO:0007744" key="27">
    <source>
        <dbReference type="PDB" id="5FH0"/>
    </source>
</evidence>
<evidence type="ECO:0007744" key="28">
    <source>
        <dbReference type="PDB" id="5FH1"/>
    </source>
</evidence>
<evidence type="ECO:0007744" key="29">
    <source>
        <dbReference type="PDB" id="5FH2"/>
    </source>
</evidence>
<evidence type="ECO:0007744" key="30">
    <source>
        <dbReference type="PDB" id="5FH3"/>
    </source>
</evidence>
<evidence type="ECO:0007744" key="31">
    <source>
        <dbReference type="PDB" id="5FH4"/>
    </source>
</evidence>
<evidence type="ECO:0007744" key="32">
    <source>
        <dbReference type="PDB" id="5FH5"/>
    </source>
</evidence>
<evidence type="ECO:0007744" key="33">
    <source>
        <dbReference type="PDB" id="5V95"/>
    </source>
</evidence>
<evidence type="ECO:0007744" key="34">
    <source>
        <dbReference type="PDB" id="5V97"/>
    </source>
</evidence>
<evidence type="ECO:0007744" key="35">
    <source>
        <dbReference type="PDB" id="5V9F"/>
    </source>
</evidence>
<evidence type="ECO:0007744" key="36">
    <source>
        <dbReference type="PDB" id="5V9G"/>
    </source>
</evidence>
<evidence type="ECO:0007744" key="37">
    <source>
        <dbReference type="PDB" id="5V9H"/>
    </source>
</evidence>
<evidence type="ECO:0007744" key="38">
    <source>
        <dbReference type="PDB" id="6P5O"/>
    </source>
</evidence>
<evidence type="ECO:0007744" key="39">
    <source>
    </source>
</evidence>
<evidence type="ECO:0007829" key="40">
    <source>
        <dbReference type="PDB" id="2RKD"/>
    </source>
</evidence>
<evidence type="ECO:0007829" key="41">
    <source>
        <dbReference type="PDB" id="3DT4"/>
    </source>
</evidence>
<evidence type="ECO:0007829" key="42">
    <source>
        <dbReference type="PDB" id="3MOE"/>
    </source>
</evidence>
<evidence type="ECO:0007829" key="43">
    <source>
        <dbReference type="PDB" id="4GMU"/>
    </source>
</evidence>
<evidence type="ECO:0007829" key="44">
    <source>
        <dbReference type="PDB" id="4GNQ"/>
    </source>
</evidence>
<evidence type="ECO:0007829" key="45">
    <source>
        <dbReference type="PDB" id="5FH4"/>
    </source>
</evidence>
<evidence type="ECO:0007829" key="46">
    <source>
        <dbReference type="PDB" id="6YI9"/>
    </source>
</evidence>
<organism>
    <name type="scientific">Rattus norvegicus</name>
    <name type="common">Rat</name>
    <dbReference type="NCBI Taxonomy" id="10116"/>
    <lineage>
        <taxon>Eukaryota</taxon>
        <taxon>Metazoa</taxon>
        <taxon>Chordata</taxon>
        <taxon>Craniata</taxon>
        <taxon>Vertebrata</taxon>
        <taxon>Euteleostomi</taxon>
        <taxon>Mammalia</taxon>
        <taxon>Eutheria</taxon>
        <taxon>Euarchontoglires</taxon>
        <taxon>Glires</taxon>
        <taxon>Rodentia</taxon>
        <taxon>Myomorpha</taxon>
        <taxon>Muroidea</taxon>
        <taxon>Muridae</taxon>
        <taxon>Murinae</taxon>
        <taxon>Rattus</taxon>
    </lineage>
</organism>